<evidence type="ECO:0000255" key="1"/>
<evidence type="ECO:0000269" key="2">
    <source>
    </source>
</evidence>
<evidence type="ECO:0000269" key="3">
    <source>
    </source>
</evidence>
<evidence type="ECO:0000269" key="4">
    <source ref="2"/>
</evidence>
<evidence type="ECO:0000305" key="5"/>
<comment type="function">
    <text evidence="2 3">Acyl-CoA-dependent acyltransferase involved in the synthesis of lupanine alkaloids. Can use both (-)-13alpha-hydroxymultiflorine and (+)-13alpha-hydroxylupanine as substrates. Lower activity with (-)-3beta, 13alpha-dihydroxylupanine, but no activity with (+)-epilupinine and (-)-lupinine as substrates. Tigloyl-CoA, benzoyl-CoA and, more slowly, acetyl-CoA, propionyl-CoA and 2-butenoyl-CoA can act as acyl donors.</text>
</comment>
<comment type="catalytic activity">
    <reaction evidence="2 3">
        <text>13-hydroxylupanine + (2E)-2-methylbut-2-enoyl-CoA = 13-(2-methylcrotonoyloxy)lupanine + CoA</text>
        <dbReference type="Rhea" id="RHEA:12360"/>
        <dbReference type="ChEBI" id="CHEBI:57287"/>
        <dbReference type="ChEBI" id="CHEBI:57337"/>
        <dbReference type="ChEBI" id="CHEBI:58446"/>
        <dbReference type="ChEBI" id="CHEBI:58460"/>
        <dbReference type="EC" id="2.3.1.93"/>
    </reaction>
</comment>
<comment type="activity regulation">
    <text evidence="2 3">Inhibited by N-ethylmaleimide, p-chloromercuribenzoic acid and diethylpyrocarbonate (DEPC).</text>
</comment>
<comment type="biophysicochemical properties">
    <kinetics>
        <KM evidence="2 3">94 uM for 13alpha-hydroxymultiflorine (with tigloyl-CoA as cosubstrate)</KM>
        <KM evidence="2 3">112 uM for 13alpha-hydroxylupanine (with tigloyl-CoA as cosubstrate)</KM>
        <KM evidence="2 3">98 uM for tigloyl-CoA (with 13alpha-hydroxymultiflorine as cosubstrate)</KM>
        <KM evidence="2 3">359 uM for tigloyl-CoA (with 13alpha-hydroxylupanine as cosubstrate)</KM>
        <KM evidence="2 3">93 uM for benzoyl-CoA (with 13alpha-hydroxymultiflorine as cosubstrate)</KM>
        <KM evidence="2 3">405 uM for benzoyl-CoA (with 13alpha-hydroxylupanine as cosubstrate)</KM>
    </kinetics>
    <phDependence>
        <text evidence="2 3">Optimum pH is 8.0.</text>
    </phDependence>
</comment>
<comment type="subunit">
    <text evidence="3">Monomer.</text>
</comment>
<comment type="tissue specificity">
    <text evidence="2 3 4">Expressed in roots and hypocotyls. Detected in seeds, leaves and cotyledons, but not in young developing leaves.</text>
</comment>
<comment type="similarity">
    <text evidence="5">Belongs to the plant acyltransferase family.</text>
</comment>
<dbReference type="EC" id="2.3.1.93"/>
<dbReference type="EMBL" id="AB181292">
    <property type="protein sequence ID" value="BAD89275.1"/>
    <property type="molecule type" value="mRNA"/>
</dbReference>
<dbReference type="EMBL" id="EF381744">
    <property type="protein sequence ID" value="ABN48480.1"/>
    <property type="molecule type" value="Genomic_DNA"/>
</dbReference>
<dbReference type="SMR" id="Q5H873"/>
<dbReference type="KEGG" id="ag:BAD89275"/>
<dbReference type="BRENDA" id="2.3.1.93">
    <property type="organism ID" value="3089"/>
</dbReference>
<dbReference type="GO" id="GO:0047203">
    <property type="term" value="F:13-hydroxylupinine O-tigloyltransferase activity"/>
    <property type="evidence" value="ECO:0000314"/>
    <property type="project" value="UniProtKB"/>
</dbReference>
<dbReference type="GO" id="GO:0009821">
    <property type="term" value="P:alkaloid biosynthetic process"/>
    <property type="evidence" value="ECO:0000314"/>
    <property type="project" value="UniProtKB"/>
</dbReference>
<dbReference type="FunFam" id="3.30.559.10:FF:000015">
    <property type="entry name" value="Spermidine hydroxycinnamoyl transferase"/>
    <property type="match status" value="1"/>
</dbReference>
<dbReference type="Gene3D" id="3.30.559.10">
    <property type="entry name" value="Chloramphenicol acetyltransferase-like domain"/>
    <property type="match status" value="2"/>
</dbReference>
<dbReference type="InterPro" id="IPR023213">
    <property type="entry name" value="CAT-like_dom_sf"/>
</dbReference>
<dbReference type="InterPro" id="IPR050898">
    <property type="entry name" value="Plant_acyltransferase"/>
</dbReference>
<dbReference type="PANTHER" id="PTHR31147">
    <property type="entry name" value="ACYL TRANSFERASE 4"/>
    <property type="match status" value="1"/>
</dbReference>
<dbReference type="PANTHER" id="PTHR31147:SF66">
    <property type="entry name" value="OS05G0315700 PROTEIN"/>
    <property type="match status" value="1"/>
</dbReference>
<dbReference type="Pfam" id="PF02458">
    <property type="entry name" value="Transferase"/>
    <property type="match status" value="1"/>
</dbReference>
<reference key="1">
    <citation type="journal article" date="2005" name="Plant Cell Physiol.">
        <title>Molecular characterization of a novel quinolizidine alkaloid O-tigloyltransferase: cDNA cloning, catalytic activity of recombinant protein and expression analysis in Lupinus plants.</title>
        <authorList>
            <person name="Okada T."/>
            <person name="Hirai M.Y."/>
            <person name="Suzuki H."/>
            <person name="Yamazaki M."/>
            <person name="Saito K."/>
        </authorList>
    </citation>
    <scope>NUCLEOTIDE SEQUENCE [MRNA]</scope>
    <scope>PROTEIN SEQUENCE OF 2-9; 15-24; 229-233; 360-371; 383-390 AND 435-441</scope>
    <scope>FUNCTION</scope>
    <scope>CATALYTIC ACTIVITY</scope>
    <scope>BIOPHYSICOCHEMICAL PROPERTIES</scope>
    <scope>ACTIVITY REGULATION</scope>
    <scope>TISSUE SPECIFICITY</scope>
    <source>
        <tissue>Root</tissue>
    </source>
</reference>
<reference key="2">
    <citation type="journal article" date="2007" name="Ann. Appl. Biol.">
        <title>A quinolizidine alkaloid O-tigloyltransferase gene in wild and domesticated white lupin (Lupinus albus).</title>
        <authorList>
            <person name="Chen Y."/>
            <person name="Lee L.S."/>
            <person name="Luckett D.J."/>
            <person name="Henry R."/>
            <person name="Hill H."/>
            <person name="Edwards M."/>
        </authorList>
        <dbReference type="AGRICOLA" id="IND43981835"/>
    </citation>
    <scope>NUCLEOTIDE SEQUENCE [GENOMIC DNA]</scope>
    <scope>TISSUE SPECIFICITY</scope>
</reference>
<reference key="3">
    <citation type="journal article" date="1994" name="J. Biol. Chem.">
        <title>A novel O-tigloyltransferase for alkaloid biosynthesis in plants. Purification, characterization, and distribution in Lupinus plants.</title>
        <authorList>
            <person name="Suzuki H."/>
            <person name="Murakoshi I."/>
            <person name="Saito K."/>
        </authorList>
    </citation>
    <scope>FUNCTION</scope>
    <scope>CATALYTIC ACTIVITY</scope>
    <scope>BIOPHYSICOCHEMICAL PROPERTIES</scope>
    <scope>ACTIVITY REGULATION</scope>
    <scope>SUBUNIT</scope>
    <scope>TISSUE SPECIFICITY</scope>
</reference>
<protein>
    <recommendedName>
        <fullName>13-hydroxylupanine O-tigloyltransferase</fullName>
        <ecNumber>2.3.1.93</ecNumber>
    </recommendedName>
    <alternativeName>
        <fullName>(-)-13alpha-hydroxymultiflorine/(+)-13alpha-hydroxylupanine O-tigloyltransferase</fullName>
        <shortName>HMT/HLTase</shortName>
    </alternativeName>
    <alternativeName>
        <fullName>Quinolizidine alkaloid O-tigloyltransferase</fullName>
    </alternativeName>
</protein>
<keyword id="KW-0012">Acyltransferase</keyword>
<keyword id="KW-0903">Direct protein sequencing</keyword>
<keyword id="KW-0808">Transferase</keyword>
<gene>
    <name type="primary">HMT/HLT</name>
</gene>
<feature type="chain" id="PRO_0000412590" description="13-hydroxylupanine O-tigloyltransferase">
    <location>
        <begin position="1"/>
        <end position="453"/>
    </location>
</feature>
<feature type="active site" description="Proton acceptor" evidence="1">
    <location>
        <position position="166"/>
    </location>
</feature>
<feature type="active site" description="Proton acceptor" evidence="1">
    <location>
        <position position="385"/>
    </location>
</feature>
<feature type="sequence conflict" description="In Ref. 2; ABN48480." evidence="5" ref="2">
    <original>E</original>
    <variation>A</variation>
    <location>
        <position position="65"/>
    </location>
</feature>
<organism>
    <name type="scientific">Lupinus albus</name>
    <name type="common">White lupine</name>
    <name type="synonym">Lupinus termis</name>
    <dbReference type="NCBI Taxonomy" id="3870"/>
    <lineage>
        <taxon>Eukaryota</taxon>
        <taxon>Viridiplantae</taxon>
        <taxon>Streptophyta</taxon>
        <taxon>Embryophyta</taxon>
        <taxon>Tracheophyta</taxon>
        <taxon>Spermatophyta</taxon>
        <taxon>Magnoliopsida</taxon>
        <taxon>eudicotyledons</taxon>
        <taxon>Gunneridae</taxon>
        <taxon>Pentapetalae</taxon>
        <taxon>rosids</taxon>
        <taxon>fabids</taxon>
        <taxon>Fabales</taxon>
        <taxon>Fabaceae</taxon>
        <taxon>Papilionoideae</taxon>
        <taxon>50 kb inversion clade</taxon>
        <taxon>genistoids sensu lato</taxon>
        <taxon>core genistoids</taxon>
        <taxon>Genisteae</taxon>
        <taxon>Lupinus</taxon>
    </lineage>
</organism>
<proteinExistence type="evidence at protein level"/>
<name>HLTT_LUPAL</name>
<sequence length="453" mass="51181">MAPQTQSLVFKVRRNPQELVTPAKPTPKEFKLLSDIDDQTSLRSLTPLVTIYRNNPSMEGKDPVEIIREALSKTLVFYYPFAGRLRNGPNGKLMVDCTGEGVIFIEADADVTLDQFGIDLHPPFPCFDQLLYDVPGSDGILDSPLLLIQVTRLKCGGFIFAVRLNHAMCDAIGMSQFMKGLAEIARGEPKPFILPVWHRELLCARNPPKVTFIHNEYQKPPHDNNNNNFILQHSSFFFGPNELDAIRRLLPYHHSKSTTSDILTAFLWRCRTLALQPENPNHEFRLLYILNARYGRCSFNPPLPEGFYGNAFVSPAAISTGEKLCNNPLEYALELMKEAKSKGTEEYVHSVADLMVIKGRPSYFYNDVGYLEVSDLTKARFRDVDFGWGKAVYGGATQGYFSSILYVSYTNSKGVEGIMALTSLPTKAMERFEKELDDLFKTKDKSQILRSHI</sequence>
<accession>Q5H873</accession>
<accession>A3FK14</accession>